<keyword id="KW-0025">Alternative splicing</keyword>
<keyword id="KW-0217">Developmental protein</keyword>
<keyword id="KW-0221">Differentiation</keyword>
<keyword id="KW-0238">DNA-binding</keyword>
<keyword id="KW-0287">Flowering</keyword>
<keyword id="KW-0539">Nucleus</keyword>
<keyword id="KW-1185">Reference proteome</keyword>
<keyword id="KW-0804">Transcription</keyword>
<keyword id="KW-0805">Transcription regulation</keyword>
<dbReference type="EMBL" id="AY141221">
    <property type="protein sequence ID" value="AAN52785.1"/>
    <property type="molecule type" value="mRNA"/>
</dbReference>
<dbReference type="EMBL" id="AB010074">
    <property type="protein sequence ID" value="BAB11255.1"/>
    <property type="molecule type" value="Genomic_DNA"/>
</dbReference>
<dbReference type="EMBL" id="AB025623">
    <property type="protein sequence ID" value="BAB11255.1"/>
    <property type="status" value="JOINED"/>
    <property type="molecule type" value="Genomic_DNA"/>
</dbReference>
<dbReference type="EMBL" id="CP002688">
    <property type="protein sequence ID" value="AED96136.1"/>
    <property type="molecule type" value="Genomic_DNA"/>
</dbReference>
<dbReference type="EMBL" id="CP002688">
    <property type="protein sequence ID" value="AED96137.1"/>
    <property type="molecule type" value="Genomic_DNA"/>
</dbReference>
<dbReference type="EMBL" id="DQ447061">
    <property type="protein sequence ID" value="ABE66238.1"/>
    <property type="molecule type" value="mRNA"/>
</dbReference>
<dbReference type="EMBL" id="DQ653360">
    <property type="protein sequence ID" value="ABK28751.1"/>
    <property type="status" value="ALT_SEQ"/>
    <property type="molecule type" value="mRNA"/>
</dbReference>
<dbReference type="RefSeq" id="NP_001078745.1">
    <molecule id="Q9FLH5-2"/>
    <property type="nucleotide sequence ID" value="NM_001085276.1"/>
</dbReference>
<dbReference type="RefSeq" id="NP_199999.1">
    <molecule id="Q9FLH5-1"/>
    <property type="nucleotide sequence ID" value="NM_124565.2"/>
</dbReference>
<dbReference type="SMR" id="Q9FLH5"/>
<dbReference type="FunCoup" id="Q9FLH5">
    <property type="interactions" value="17"/>
</dbReference>
<dbReference type="IntAct" id="Q9FLH5">
    <property type="interactions" value="1"/>
</dbReference>
<dbReference type="STRING" id="3702.Q9FLH5"/>
<dbReference type="PaxDb" id="3702-AT5G51860.1"/>
<dbReference type="EnsemblPlants" id="AT5G51860.1">
    <molecule id="Q9FLH5-1"/>
    <property type="protein sequence ID" value="AT5G51860.1"/>
    <property type="gene ID" value="AT5G51860"/>
</dbReference>
<dbReference type="EnsemblPlants" id="AT5G51860.2">
    <molecule id="Q9FLH5-2"/>
    <property type="protein sequence ID" value="AT5G51860.2"/>
    <property type="gene ID" value="AT5G51860"/>
</dbReference>
<dbReference type="GeneID" id="835261"/>
<dbReference type="Gramene" id="AT5G51860.1">
    <molecule id="Q9FLH5-1"/>
    <property type="protein sequence ID" value="AT5G51860.1"/>
    <property type="gene ID" value="AT5G51860"/>
</dbReference>
<dbReference type="Gramene" id="AT5G51860.2">
    <molecule id="Q9FLH5-2"/>
    <property type="protein sequence ID" value="AT5G51860.2"/>
    <property type="gene ID" value="AT5G51860"/>
</dbReference>
<dbReference type="KEGG" id="ath:AT5G51860"/>
<dbReference type="Araport" id="AT5G51860"/>
<dbReference type="TAIR" id="AT5G51860">
    <property type="gene designation" value="AGL72"/>
</dbReference>
<dbReference type="eggNOG" id="KOG0014">
    <property type="taxonomic scope" value="Eukaryota"/>
</dbReference>
<dbReference type="InParanoid" id="Q9FLH5"/>
<dbReference type="OMA" id="LEKDHWG"/>
<dbReference type="PhylomeDB" id="Q9FLH5"/>
<dbReference type="PRO" id="PR:Q9FLH5"/>
<dbReference type="Proteomes" id="UP000006548">
    <property type="component" value="Chromosome 5"/>
</dbReference>
<dbReference type="ExpressionAtlas" id="Q9FLH5">
    <property type="expression patterns" value="baseline and differential"/>
</dbReference>
<dbReference type="GO" id="GO:0005634">
    <property type="term" value="C:nucleus"/>
    <property type="evidence" value="ECO:0007669"/>
    <property type="project" value="UniProtKB-SubCell"/>
</dbReference>
<dbReference type="GO" id="GO:0003700">
    <property type="term" value="F:DNA-binding transcription factor activity"/>
    <property type="evidence" value="ECO:0000250"/>
    <property type="project" value="TAIR"/>
</dbReference>
<dbReference type="GO" id="GO:0046983">
    <property type="term" value="F:protein dimerization activity"/>
    <property type="evidence" value="ECO:0007669"/>
    <property type="project" value="InterPro"/>
</dbReference>
<dbReference type="GO" id="GO:0000977">
    <property type="term" value="F:RNA polymerase II transcription regulatory region sequence-specific DNA binding"/>
    <property type="evidence" value="ECO:0007669"/>
    <property type="project" value="InterPro"/>
</dbReference>
<dbReference type="GO" id="GO:0030154">
    <property type="term" value="P:cell differentiation"/>
    <property type="evidence" value="ECO:0007669"/>
    <property type="project" value="UniProtKB-KW"/>
</dbReference>
<dbReference type="GO" id="GO:0009908">
    <property type="term" value="P:flower development"/>
    <property type="evidence" value="ECO:0007669"/>
    <property type="project" value="UniProtKB-KW"/>
</dbReference>
<dbReference type="GO" id="GO:0045944">
    <property type="term" value="P:positive regulation of transcription by RNA polymerase II"/>
    <property type="evidence" value="ECO:0007669"/>
    <property type="project" value="InterPro"/>
</dbReference>
<dbReference type="GO" id="GO:0009909">
    <property type="term" value="P:regulation of flower development"/>
    <property type="evidence" value="ECO:0000315"/>
    <property type="project" value="TAIR"/>
</dbReference>
<dbReference type="CDD" id="cd00265">
    <property type="entry name" value="MADS_MEF2_like"/>
    <property type="match status" value="1"/>
</dbReference>
<dbReference type="FunFam" id="3.40.1810.10:FF:000003">
    <property type="entry name" value="MADS-box transcription factor MADS-MC"/>
    <property type="match status" value="1"/>
</dbReference>
<dbReference type="Gene3D" id="3.40.1810.10">
    <property type="entry name" value="Transcription factor, MADS-box"/>
    <property type="match status" value="1"/>
</dbReference>
<dbReference type="InterPro" id="IPR050142">
    <property type="entry name" value="MADS-box/MEF2_TF"/>
</dbReference>
<dbReference type="InterPro" id="IPR033896">
    <property type="entry name" value="MEF2-like_N"/>
</dbReference>
<dbReference type="InterPro" id="IPR002487">
    <property type="entry name" value="TF_Kbox"/>
</dbReference>
<dbReference type="InterPro" id="IPR002100">
    <property type="entry name" value="TF_MADSbox"/>
</dbReference>
<dbReference type="InterPro" id="IPR036879">
    <property type="entry name" value="TF_MADSbox_sf"/>
</dbReference>
<dbReference type="PANTHER" id="PTHR48019">
    <property type="entry name" value="SERUM RESPONSE FACTOR HOMOLOG"/>
    <property type="match status" value="1"/>
</dbReference>
<dbReference type="Pfam" id="PF01486">
    <property type="entry name" value="K-box"/>
    <property type="match status" value="1"/>
</dbReference>
<dbReference type="Pfam" id="PF00319">
    <property type="entry name" value="SRF-TF"/>
    <property type="match status" value="1"/>
</dbReference>
<dbReference type="PRINTS" id="PR00404">
    <property type="entry name" value="MADSDOMAIN"/>
</dbReference>
<dbReference type="SMART" id="SM00432">
    <property type="entry name" value="MADS"/>
    <property type="match status" value="1"/>
</dbReference>
<dbReference type="SUPFAM" id="SSF55455">
    <property type="entry name" value="SRF-like"/>
    <property type="match status" value="1"/>
</dbReference>
<dbReference type="PROSITE" id="PS51297">
    <property type="entry name" value="K_BOX"/>
    <property type="match status" value="1"/>
</dbReference>
<dbReference type="PROSITE" id="PS50066">
    <property type="entry name" value="MADS_BOX_2"/>
    <property type="match status" value="1"/>
</dbReference>
<evidence type="ECO:0000255" key="1">
    <source>
        <dbReference type="PROSITE-ProRule" id="PRU00251"/>
    </source>
</evidence>
<evidence type="ECO:0000255" key="2">
    <source>
        <dbReference type="PROSITE-ProRule" id="PRU00629"/>
    </source>
</evidence>
<evidence type="ECO:0000269" key="3">
    <source>
    </source>
</evidence>
<evidence type="ECO:0000305" key="4"/>
<evidence type="ECO:0000312" key="5">
    <source>
        <dbReference type="Araport" id="AT5G51860"/>
    </source>
</evidence>
<evidence type="ECO:0000312" key="6">
    <source>
        <dbReference type="EMBL" id="BAB11255.1"/>
    </source>
</evidence>
<organism>
    <name type="scientific">Arabidopsis thaliana</name>
    <name type="common">Mouse-ear cress</name>
    <dbReference type="NCBI Taxonomy" id="3702"/>
    <lineage>
        <taxon>Eukaryota</taxon>
        <taxon>Viridiplantae</taxon>
        <taxon>Streptophyta</taxon>
        <taxon>Embryophyta</taxon>
        <taxon>Tracheophyta</taxon>
        <taxon>Spermatophyta</taxon>
        <taxon>Magnoliopsida</taxon>
        <taxon>eudicotyledons</taxon>
        <taxon>Gunneridae</taxon>
        <taxon>Pentapetalae</taxon>
        <taxon>rosids</taxon>
        <taxon>malvids</taxon>
        <taxon>Brassicales</taxon>
        <taxon>Brassicaceae</taxon>
        <taxon>Camelineae</taxon>
        <taxon>Arabidopsis</taxon>
    </lineage>
</organism>
<reference key="1">
    <citation type="journal article" date="2003" name="Plant Cell">
        <title>Molecular and phylogenetic analyses of the complete MADS-box transcription factor family in Arabidopsis: new openings to the MADS world.</title>
        <authorList>
            <person name="Parenicova L."/>
            <person name="de Folter S."/>
            <person name="Kieffer M."/>
            <person name="Horner D.S."/>
            <person name="Favalli C."/>
            <person name="Busscher J."/>
            <person name="Cook H.E."/>
            <person name="Ingram R.M."/>
            <person name="Kater M.M."/>
            <person name="Davies B."/>
            <person name="Angenent G.C."/>
            <person name="Colombo L."/>
        </authorList>
    </citation>
    <scope>NUCLEOTIDE SEQUENCE [MRNA] (ISOFORM 1)</scope>
    <source>
        <strain>cv. Columbia</strain>
        <tissue>Flower</tissue>
    </source>
</reference>
<reference key="2">
    <citation type="journal article" date="1998" name="DNA Res.">
        <title>Structural analysis of Arabidopsis thaliana chromosome 5. IV. Sequence features of the regions of 1,456,315 bp covered by nineteen physically assigned P1 and TAC clones.</title>
        <authorList>
            <person name="Sato S."/>
            <person name="Kaneko T."/>
            <person name="Kotani H."/>
            <person name="Nakamura Y."/>
            <person name="Asamizu E."/>
            <person name="Miyajima N."/>
            <person name="Tabata S."/>
        </authorList>
    </citation>
    <scope>NUCLEOTIDE SEQUENCE [LARGE SCALE GENOMIC DNA]</scope>
    <source>
        <strain>cv. Columbia</strain>
    </source>
</reference>
<reference key="3">
    <citation type="journal article" date="2000" name="DNA Res.">
        <title>Structural analysis of Arabidopsis thaliana chromosome 5. X. Sequence features of the regions of 3,076,755 bp covered by sixty P1 and TAC clones.</title>
        <authorList>
            <person name="Sato S."/>
            <person name="Nakamura Y."/>
            <person name="Kaneko T."/>
            <person name="Katoh T."/>
            <person name="Asamizu E."/>
            <person name="Kotani H."/>
            <person name="Tabata S."/>
        </authorList>
    </citation>
    <scope>NUCLEOTIDE SEQUENCE [LARGE SCALE GENOMIC DNA]</scope>
    <source>
        <strain>cv. Columbia</strain>
    </source>
</reference>
<reference key="4">
    <citation type="journal article" date="2017" name="Plant J.">
        <title>Araport11: a complete reannotation of the Arabidopsis thaliana reference genome.</title>
        <authorList>
            <person name="Cheng C.Y."/>
            <person name="Krishnakumar V."/>
            <person name="Chan A.P."/>
            <person name="Thibaud-Nissen F."/>
            <person name="Schobel S."/>
            <person name="Town C.D."/>
        </authorList>
    </citation>
    <scope>GENOME REANNOTATION</scope>
    <source>
        <strain>cv. Columbia</strain>
    </source>
</reference>
<reference key="5">
    <citation type="journal article" date="2006" name="Plant Biotechnol. J.">
        <title>Simultaneous high-throughput recombinational cloning of open reading frames in closed and open configurations.</title>
        <authorList>
            <person name="Underwood B.A."/>
            <person name="Vanderhaeghen R."/>
            <person name="Whitford R."/>
            <person name="Town C.D."/>
            <person name="Hilson P."/>
        </authorList>
    </citation>
    <scope>NUCLEOTIDE SEQUENCE [LARGE SCALE MRNA] (ISOFORM 2)</scope>
    <source>
        <strain>cv. Columbia</strain>
    </source>
</reference>
<reference key="6">
    <citation type="journal article" date="2011" name="Plant J.">
        <title>The Arabidopsis SOC1-like genes AGL42, AGL71 and AGL72 promote flowering in the shoot apical and axillary meristems.</title>
        <authorList>
            <person name="Dorca-Fornell C."/>
            <person name="Gregis V."/>
            <person name="Grandi V."/>
            <person name="Coupland G."/>
            <person name="Colombo L."/>
            <person name="Kater M.M."/>
        </authorList>
    </citation>
    <scope>FUNCTION</scope>
    <scope>DEVELOPMENTAL STAGE</scope>
    <scope>DISRUPTION PHENOTYPE</scope>
</reference>
<feature type="chain" id="PRO_0000436029" description="MADS-box protein AGL72">
    <location>
        <begin position="1"/>
        <end position="211"/>
    </location>
</feature>
<feature type="domain" description="MADS-box" evidence="1">
    <location>
        <begin position="1"/>
        <end position="61"/>
    </location>
</feature>
<feature type="domain" description="K-box" evidence="2">
    <location>
        <begin position="88"/>
        <end position="187"/>
    </location>
</feature>
<feature type="splice variant" id="VSP_058214" description="In isoform 2.">
    <location>
        <begin position="172"/>
        <end position="180"/>
    </location>
</feature>
<protein>
    <recommendedName>
        <fullName>MADS-box protein AGL72</fullName>
    </recommendedName>
    <alternativeName>
        <fullName>Protein AGAMOUS-LIKE 72</fullName>
    </alternativeName>
</protein>
<sequence>MVRGKIEIKKIENVTSRQVTFSKRRSGLFKKAHELSVLCDAQVAAMIFSQKGRLYEFASSDIRNTIKRYAEYKREYFVAETHPIEQYVQGLKKEMVTMVKKIEVLEVHNRKMMGQSLDSCSVKELSEIATQIEKSLHMVRLRKAKLYEDELQKLKAKERELKDERVRLSLKKTIYTHLCQVGERPMGMPSGSKEKEDVETDLFIGFLKNRP</sequence>
<gene>
    <name type="primary">AGL72</name>
    <name evidence="5" type="ordered locus">At5g51860</name>
    <name evidence="6" type="ORF">MJM18.1</name>
</gene>
<comment type="function">
    <text evidence="3">MADS-box transcription factor that acts with AGL42 and AGL71 in the control of flowering time. Promotes flowering at the shoot apical and axillary meristems. Seems to act through a gibberellin-dependent pathway. Interacts genetically with SOC1 and its expression is directly regulated by SOC1.</text>
</comment>
<comment type="subcellular location">
    <subcellularLocation>
        <location evidence="1">Nucleus</location>
    </subcellularLocation>
</comment>
<comment type="alternative products">
    <event type="alternative splicing"/>
    <isoform>
        <id>Q9FLH5-1</id>
        <name>1</name>
        <sequence type="displayed"/>
    </isoform>
    <isoform>
        <id>Q9FLH5-2</id>
        <name>2</name>
        <sequence type="described" ref="VSP_058214"/>
    </isoform>
</comment>
<comment type="developmental stage">
    <text evidence="3">Expressed in the shoot apical meristem (SAM) during the vegetative phase and the floral transition. After floral transition, expressed in apical meristem (AM), inflorescence meristem (IM) and floral primordia.</text>
</comment>
<comment type="disruption phenotype">
    <text evidence="3">No visible phenotype under normal growth conditions.</text>
</comment>
<comment type="sequence caution" evidence="4">
    <conflict type="erroneous termination">
        <sequence resource="EMBL-CDS" id="ABK28751"/>
    </conflict>
    <text>Extended C-terminus.</text>
</comment>
<accession>Q9FLH5</accession>
<accession>A0MFN4</accession>
<accession>Q1PDK7</accession>
<proteinExistence type="evidence at transcript level"/>
<name>AGL72_ARATH</name>